<comment type="function">
    <text evidence="1">DNA ligase that seals nicks in double-stranded DNA during DNA replication, DNA recombination and DNA repair.</text>
</comment>
<comment type="catalytic activity">
    <reaction evidence="1">
        <text>ATP + (deoxyribonucleotide)n-3'-hydroxyl + 5'-phospho-(deoxyribonucleotide)m = (deoxyribonucleotide)n+m + AMP + diphosphate.</text>
        <dbReference type="EC" id="6.5.1.1"/>
    </reaction>
</comment>
<comment type="cofactor">
    <cofactor evidence="1">
        <name>Mg(2+)</name>
        <dbReference type="ChEBI" id="CHEBI:18420"/>
    </cofactor>
</comment>
<comment type="similarity">
    <text evidence="1">Belongs to the ATP-dependent DNA ligase family.</text>
</comment>
<name>DNLI_ANAD2</name>
<accession>B8JBM1</accession>
<dbReference type="EC" id="6.5.1.1" evidence="1"/>
<dbReference type="EMBL" id="CP001359">
    <property type="protein sequence ID" value="ACL67629.1"/>
    <property type="molecule type" value="Genomic_DNA"/>
</dbReference>
<dbReference type="RefSeq" id="WP_015935329.1">
    <property type="nucleotide sequence ID" value="NC_011891.1"/>
</dbReference>
<dbReference type="SMR" id="B8JBM1"/>
<dbReference type="KEGG" id="acp:A2cp1_4312"/>
<dbReference type="HOGENOM" id="CLU_005138_6_1_7"/>
<dbReference type="Proteomes" id="UP000007089">
    <property type="component" value="Chromosome"/>
</dbReference>
<dbReference type="GO" id="GO:0005524">
    <property type="term" value="F:ATP binding"/>
    <property type="evidence" value="ECO:0007669"/>
    <property type="project" value="UniProtKB-UniRule"/>
</dbReference>
<dbReference type="GO" id="GO:0003677">
    <property type="term" value="F:DNA binding"/>
    <property type="evidence" value="ECO:0007669"/>
    <property type="project" value="InterPro"/>
</dbReference>
<dbReference type="GO" id="GO:0003910">
    <property type="term" value="F:DNA ligase (ATP) activity"/>
    <property type="evidence" value="ECO:0007669"/>
    <property type="project" value="UniProtKB-UniRule"/>
</dbReference>
<dbReference type="GO" id="GO:0046872">
    <property type="term" value="F:metal ion binding"/>
    <property type="evidence" value="ECO:0007669"/>
    <property type="project" value="UniProtKB-KW"/>
</dbReference>
<dbReference type="GO" id="GO:0051301">
    <property type="term" value="P:cell division"/>
    <property type="evidence" value="ECO:0007669"/>
    <property type="project" value="UniProtKB-KW"/>
</dbReference>
<dbReference type="GO" id="GO:0071897">
    <property type="term" value="P:DNA biosynthetic process"/>
    <property type="evidence" value="ECO:0007669"/>
    <property type="project" value="InterPro"/>
</dbReference>
<dbReference type="GO" id="GO:0006310">
    <property type="term" value="P:DNA recombination"/>
    <property type="evidence" value="ECO:0007669"/>
    <property type="project" value="UniProtKB-UniRule"/>
</dbReference>
<dbReference type="GO" id="GO:0006281">
    <property type="term" value="P:DNA repair"/>
    <property type="evidence" value="ECO:0007669"/>
    <property type="project" value="UniProtKB-UniRule"/>
</dbReference>
<dbReference type="GO" id="GO:0006260">
    <property type="term" value="P:DNA replication"/>
    <property type="evidence" value="ECO:0007669"/>
    <property type="project" value="UniProtKB-UniRule"/>
</dbReference>
<dbReference type="CDD" id="cd07901">
    <property type="entry name" value="Adenylation_DNA_ligase_Arch_LigB"/>
    <property type="match status" value="1"/>
</dbReference>
<dbReference type="CDD" id="cd07972">
    <property type="entry name" value="OBF_DNA_ligase_Arch_LigB"/>
    <property type="match status" value="1"/>
</dbReference>
<dbReference type="FunFam" id="2.40.50.140:FF:000163">
    <property type="entry name" value="Probable DNA ligase"/>
    <property type="match status" value="1"/>
</dbReference>
<dbReference type="Gene3D" id="1.10.3260.10">
    <property type="entry name" value="DNA ligase, ATP-dependent, N-terminal domain"/>
    <property type="match status" value="1"/>
</dbReference>
<dbReference type="Gene3D" id="3.30.470.30">
    <property type="entry name" value="DNA ligase/mRNA capping enzyme"/>
    <property type="match status" value="1"/>
</dbReference>
<dbReference type="Gene3D" id="2.40.50.140">
    <property type="entry name" value="Nucleic acid-binding proteins"/>
    <property type="match status" value="1"/>
</dbReference>
<dbReference type="HAMAP" id="MF_00407">
    <property type="entry name" value="DNA_ligase"/>
    <property type="match status" value="1"/>
</dbReference>
<dbReference type="InterPro" id="IPR050191">
    <property type="entry name" value="ATP-dep_DNA_ligase"/>
</dbReference>
<dbReference type="InterPro" id="IPR022865">
    <property type="entry name" value="DNA_ligae_ATP-dep_bac/arc"/>
</dbReference>
<dbReference type="InterPro" id="IPR000977">
    <property type="entry name" value="DNA_ligase_ATP-dep"/>
</dbReference>
<dbReference type="InterPro" id="IPR012309">
    <property type="entry name" value="DNA_ligase_ATP-dep_C"/>
</dbReference>
<dbReference type="InterPro" id="IPR012310">
    <property type="entry name" value="DNA_ligase_ATP-dep_cent"/>
</dbReference>
<dbReference type="InterPro" id="IPR016059">
    <property type="entry name" value="DNA_ligase_ATP-dep_CS"/>
</dbReference>
<dbReference type="InterPro" id="IPR012308">
    <property type="entry name" value="DNA_ligase_ATP-dep_N"/>
</dbReference>
<dbReference type="InterPro" id="IPR036599">
    <property type="entry name" value="DNA_ligase_N_sf"/>
</dbReference>
<dbReference type="InterPro" id="IPR012340">
    <property type="entry name" value="NA-bd_OB-fold"/>
</dbReference>
<dbReference type="NCBIfam" id="TIGR00574">
    <property type="entry name" value="dnl1"/>
    <property type="match status" value="1"/>
</dbReference>
<dbReference type="NCBIfam" id="NF002868">
    <property type="entry name" value="PRK03180.1"/>
    <property type="match status" value="1"/>
</dbReference>
<dbReference type="PANTHER" id="PTHR45674">
    <property type="entry name" value="DNA LIGASE 1/3 FAMILY MEMBER"/>
    <property type="match status" value="1"/>
</dbReference>
<dbReference type="PANTHER" id="PTHR45674:SF13">
    <property type="entry name" value="DNA LIGASE-RELATED"/>
    <property type="match status" value="1"/>
</dbReference>
<dbReference type="Pfam" id="PF04679">
    <property type="entry name" value="DNA_ligase_A_C"/>
    <property type="match status" value="1"/>
</dbReference>
<dbReference type="Pfam" id="PF01068">
    <property type="entry name" value="DNA_ligase_A_M"/>
    <property type="match status" value="1"/>
</dbReference>
<dbReference type="Pfam" id="PF04675">
    <property type="entry name" value="DNA_ligase_A_N"/>
    <property type="match status" value="1"/>
</dbReference>
<dbReference type="SUPFAM" id="SSF117018">
    <property type="entry name" value="ATP-dependent DNA ligase DNA-binding domain"/>
    <property type="match status" value="1"/>
</dbReference>
<dbReference type="SUPFAM" id="SSF56091">
    <property type="entry name" value="DNA ligase/mRNA capping enzyme, catalytic domain"/>
    <property type="match status" value="1"/>
</dbReference>
<dbReference type="SUPFAM" id="SSF50249">
    <property type="entry name" value="Nucleic acid-binding proteins"/>
    <property type="match status" value="1"/>
</dbReference>
<dbReference type="PROSITE" id="PS00697">
    <property type="entry name" value="DNA_LIGASE_A1"/>
    <property type="match status" value="1"/>
</dbReference>
<dbReference type="PROSITE" id="PS00333">
    <property type="entry name" value="DNA_LIGASE_A2"/>
    <property type="match status" value="1"/>
</dbReference>
<dbReference type="PROSITE" id="PS50160">
    <property type="entry name" value="DNA_LIGASE_A3"/>
    <property type="match status" value="1"/>
</dbReference>
<gene>
    <name evidence="1" type="primary">lig</name>
    <name type="ordered locus">A2cp1_4312</name>
</gene>
<proteinExistence type="inferred from homology"/>
<sequence length="513" mass="54060">MLLAELAEVSRAVAATPARLEKIARLAEALRRLAPDERAVGASWLAGDLPGGRIGIGGATVRAALDAAPAEGGGPGLTVAEVDAALGRIATASGAGSAGARRRELDALLARAGAPERWFLAALLLGELRQGALEGVLADAVARAAGLPAAEVRRAAMLAGALPPVAVAALSEGAAGLARFRLRVGEPVSPMLAQTAADVEEALRALGGEAALEWKLDGARIQAHRDGGEVRVFSRSLRDVTAAVPEVVALLRAAPEPRLVLDGEAIALRADGTPEPFQVTMRRFGRRLDVERLAPDLPLTAFFFDALVAGGAELLASPERVRWAALERAVPAEQRVPRLVTRDPAEAGAFLEDALARGQEGVVAKALDAPYEAGRRGAAWLKVKRAHTLDLVVLAAEWGSGRRRGWLSNLHLGARDPSTGGFVMLGKTFKGMTDAMLAWQTERLKALATGPLDAWQVPVRPELVVEVAFDGIQSSPRYPGGLALRFARVKRYREDKRPEDADTIETVRGLYGG</sequence>
<organism>
    <name type="scientific">Anaeromyxobacter dehalogenans (strain 2CP-1 / ATCC BAA-258)</name>
    <dbReference type="NCBI Taxonomy" id="455488"/>
    <lineage>
        <taxon>Bacteria</taxon>
        <taxon>Pseudomonadati</taxon>
        <taxon>Myxococcota</taxon>
        <taxon>Myxococcia</taxon>
        <taxon>Myxococcales</taxon>
        <taxon>Cystobacterineae</taxon>
        <taxon>Anaeromyxobacteraceae</taxon>
        <taxon>Anaeromyxobacter</taxon>
    </lineage>
</organism>
<protein>
    <recommendedName>
        <fullName evidence="1">Probable DNA ligase</fullName>
        <ecNumber evidence="1">6.5.1.1</ecNumber>
    </recommendedName>
    <alternativeName>
        <fullName evidence="1">Polydeoxyribonucleotide synthase [ATP]</fullName>
    </alternativeName>
</protein>
<feature type="chain" id="PRO_1000134725" description="Probable DNA ligase">
    <location>
        <begin position="1"/>
        <end position="513"/>
    </location>
</feature>
<feature type="active site" description="N6-AMP-lysine intermediate" evidence="1">
    <location>
        <position position="215"/>
    </location>
</feature>
<feature type="binding site" evidence="1">
    <location>
        <position position="213"/>
    </location>
    <ligand>
        <name>ATP</name>
        <dbReference type="ChEBI" id="CHEBI:30616"/>
    </ligand>
</feature>
<feature type="binding site" evidence="1">
    <location>
        <position position="220"/>
    </location>
    <ligand>
        <name>ATP</name>
        <dbReference type="ChEBI" id="CHEBI:30616"/>
    </ligand>
</feature>
<feature type="binding site" evidence="1">
    <location>
        <position position="235"/>
    </location>
    <ligand>
        <name>ATP</name>
        <dbReference type="ChEBI" id="CHEBI:30616"/>
    </ligand>
</feature>
<feature type="binding site" evidence="1">
    <location>
        <position position="264"/>
    </location>
    <ligand>
        <name>ATP</name>
        <dbReference type="ChEBI" id="CHEBI:30616"/>
    </ligand>
</feature>
<feature type="binding site" evidence="1">
    <location>
        <position position="304"/>
    </location>
    <ligand>
        <name>ATP</name>
        <dbReference type="ChEBI" id="CHEBI:30616"/>
    </ligand>
</feature>
<feature type="binding site" evidence="1">
    <location>
        <position position="376"/>
    </location>
    <ligand>
        <name>ATP</name>
        <dbReference type="ChEBI" id="CHEBI:30616"/>
    </ligand>
</feature>
<feature type="binding site" evidence="1">
    <location>
        <position position="382"/>
    </location>
    <ligand>
        <name>ATP</name>
        <dbReference type="ChEBI" id="CHEBI:30616"/>
    </ligand>
</feature>
<evidence type="ECO:0000255" key="1">
    <source>
        <dbReference type="HAMAP-Rule" id="MF_00407"/>
    </source>
</evidence>
<reference key="1">
    <citation type="submission" date="2009-01" db="EMBL/GenBank/DDBJ databases">
        <title>Complete sequence of Anaeromyxobacter dehalogenans 2CP-1.</title>
        <authorList>
            <person name="Lucas S."/>
            <person name="Copeland A."/>
            <person name="Lapidus A."/>
            <person name="Glavina del Rio T."/>
            <person name="Dalin E."/>
            <person name="Tice H."/>
            <person name="Bruce D."/>
            <person name="Goodwin L."/>
            <person name="Pitluck S."/>
            <person name="Saunders E."/>
            <person name="Brettin T."/>
            <person name="Detter J.C."/>
            <person name="Han C."/>
            <person name="Larimer F."/>
            <person name="Land M."/>
            <person name="Hauser L."/>
            <person name="Kyrpides N."/>
            <person name="Ovchinnikova G."/>
            <person name="Beliaev A.S."/>
            <person name="Richardson P."/>
        </authorList>
    </citation>
    <scope>NUCLEOTIDE SEQUENCE [LARGE SCALE GENOMIC DNA]</scope>
    <source>
        <strain>2CP-1 / ATCC BAA-258</strain>
    </source>
</reference>
<keyword id="KW-0067">ATP-binding</keyword>
<keyword id="KW-0131">Cell cycle</keyword>
<keyword id="KW-0132">Cell division</keyword>
<keyword id="KW-0227">DNA damage</keyword>
<keyword id="KW-0233">DNA recombination</keyword>
<keyword id="KW-0234">DNA repair</keyword>
<keyword id="KW-0235">DNA replication</keyword>
<keyword id="KW-0436">Ligase</keyword>
<keyword id="KW-0460">Magnesium</keyword>
<keyword id="KW-0479">Metal-binding</keyword>
<keyword id="KW-0547">Nucleotide-binding</keyword>